<gene>
    <name evidence="1" type="primary">ydiU</name>
    <name evidence="1" type="synonym">selO</name>
    <name type="ordered locus">Patl_3959</name>
</gene>
<protein>
    <recommendedName>
        <fullName evidence="1">Protein nucleotidyltransferase YdiU</fullName>
        <ecNumber evidence="1">2.7.7.-</ecNumber>
    </recommendedName>
    <alternativeName>
        <fullName evidence="1">Protein adenylyltransferase YdiU</fullName>
        <ecNumber evidence="1">2.7.7.108</ecNumber>
    </alternativeName>
    <alternativeName>
        <fullName evidence="1">Protein uridylyltransferase YdiU</fullName>
        <ecNumber evidence="1">2.7.7.-</ecNumber>
    </alternativeName>
</protein>
<proteinExistence type="inferred from homology"/>
<dbReference type="EC" id="2.7.7.-" evidence="1"/>
<dbReference type="EC" id="2.7.7.108" evidence="1"/>
<dbReference type="EMBL" id="CP000388">
    <property type="protein sequence ID" value="ABG42459.1"/>
    <property type="molecule type" value="Genomic_DNA"/>
</dbReference>
<dbReference type="RefSeq" id="WP_011576662.1">
    <property type="nucleotide sequence ID" value="NC_008228.1"/>
</dbReference>
<dbReference type="SMR" id="Q15NS9"/>
<dbReference type="STRING" id="342610.Patl_3959"/>
<dbReference type="KEGG" id="pat:Patl_3959"/>
<dbReference type="eggNOG" id="COG0397">
    <property type="taxonomic scope" value="Bacteria"/>
</dbReference>
<dbReference type="HOGENOM" id="CLU_010245_4_1_6"/>
<dbReference type="OrthoDB" id="9776281at2"/>
<dbReference type="Proteomes" id="UP000001981">
    <property type="component" value="Chromosome"/>
</dbReference>
<dbReference type="GO" id="GO:0070733">
    <property type="term" value="F:AMPylase activity"/>
    <property type="evidence" value="ECO:0007669"/>
    <property type="project" value="TreeGrafter"/>
</dbReference>
<dbReference type="GO" id="GO:0005524">
    <property type="term" value="F:ATP binding"/>
    <property type="evidence" value="ECO:0007669"/>
    <property type="project" value="UniProtKB-UniRule"/>
</dbReference>
<dbReference type="GO" id="GO:0000287">
    <property type="term" value="F:magnesium ion binding"/>
    <property type="evidence" value="ECO:0007669"/>
    <property type="project" value="UniProtKB-UniRule"/>
</dbReference>
<dbReference type="HAMAP" id="MF_00692">
    <property type="entry name" value="YdiU_SelO"/>
    <property type="match status" value="1"/>
</dbReference>
<dbReference type="InterPro" id="IPR003846">
    <property type="entry name" value="SelO"/>
</dbReference>
<dbReference type="NCBIfam" id="NF000658">
    <property type="entry name" value="PRK00029.1"/>
    <property type="match status" value="1"/>
</dbReference>
<dbReference type="PANTHER" id="PTHR32057">
    <property type="entry name" value="PROTEIN ADENYLYLTRANSFERASE SELO, MITOCHONDRIAL"/>
    <property type="match status" value="1"/>
</dbReference>
<dbReference type="PANTHER" id="PTHR32057:SF14">
    <property type="entry name" value="PROTEIN ADENYLYLTRANSFERASE SELO, MITOCHONDRIAL"/>
    <property type="match status" value="1"/>
</dbReference>
<dbReference type="Pfam" id="PF02696">
    <property type="entry name" value="SelO"/>
    <property type="match status" value="1"/>
</dbReference>
<sequence length="480" mass="55051">MNLDHSYATHLGDLGALTKPLRVANPQLVEVNHTLRDALQLPASWFTQSSIMSMLFGNTSSFTTHSFAQKYGGHQFGGWNPDLGDGRGVLLGEAKDKFGKSWDLHLKGAGPTPYSRFADGRAVLRSTLREYLASEALHHMGIPTSRALCLITSDEPVYREKQEKAAMMIRVSQSHIRFGHFEYFYHNGELDKLKRLFDYCFEHHFSACLHSESPHLAMLEKIVTDTATLIAKWQAYGFNHGVMNTDNMSIHGITFDFGPYAFLDDFNPKFVCNHSDHRGRYAFEQQPSVGLWNLNALAHAFTPYLSVEQIKGALSQYEASLMAEFSQLMRQKLGLYENTQNTAELVNRWLDLIYQDKRDYHISFRLLCEVDEHGENQPLVDHFIQRDTAKTWLEHYQNALITQGVKRQERQANMRNINPEYVLRNYQAQLAIDAAQNGDFSRFRKLLHVLQHPFESKPEYAEFAKPPPNWGKHMEISCSS</sequence>
<evidence type="ECO:0000255" key="1">
    <source>
        <dbReference type="HAMAP-Rule" id="MF_00692"/>
    </source>
</evidence>
<name>SELO_PSEA6</name>
<organism>
    <name type="scientific">Pseudoalteromonas atlantica (strain T6c / ATCC BAA-1087)</name>
    <dbReference type="NCBI Taxonomy" id="3042615"/>
    <lineage>
        <taxon>Bacteria</taxon>
        <taxon>Pseudomonadati</taxon>
        <taxon>Pseudomonadota</taxon>
        <taxon>Gammaproteobacteria</taxon>
        <taxon>Alteromonadales</taxon>
        <taxon>Alteromonadaceae</taxon>
        <taxon>Paraglaciecola</taxon>
    </lineage>
</organism>
<accession>Q15NS9</accession>
<comment type="function">
    <text evidence="1">Nucleotidyltransferase involved in the post-translational modification of proteins. It can catalyze the addition of adenosine monophosphate (AMP) or uridine monophosphate (UMP) to a protein, resulting in modifications known as AMPylation and UMPylation.</text>
</comment>
<comment type="catalytic activity">
    <reaction evidence="1">
        <text>L-seryl-[protein] + ATP = 3-O-(5'-adenylyl)-L-seryl-[protein] + diphosphate</text>
        <dbReference type="Rhea" id="RHEA:58120"/>
        <dbReference type="Rhea" id="RHEA-COMP:9863"/>
        <dbReference type="Rhea" id="RHEA-COMP:15073"/>
        <dbReference type="ChEBI" id="CHEBI:29999"/>
        <dbReference type="ChEBI" id="CHEBI:30616"/>
        <dbReference type="ChEBI" id="CHEBI:33019"/>
        <dbReference type="ChEBI" id="CHEBI:142516"/>
        <dbReference type="EC" id="2.7.7.108"/>
    </reaction>
</comment>
<comment type="catalytic activity">
    <reaction evidence="1">
        <text>L-threonyl-[protein] + ATP = 3-O-(5'-adenylyl)-L-threonyl-[protein] + diphosphate</text>
        <dbReference type="Rhea" id="RHEA:54292"/>
        <dbReference type="Rhea" id="RHEA-COMP:11060"/>
        <dbReference type="Rhea" id="RHEA-COMP:13847"/>
        <dbReference type="ChEBI" id="CHEBI:30013"/>
        <dbReference type="ChEBI" id="CHEBI:30616"/>
        <dbReference type="ChEBI" id="CHEBI:33019"/>
        <dbReference type="ChEBI" id="CHEBI:138113"/>
        <dbReference type="EC" id="2.7.7.108"/>
    </reaction>
</comment>
<comment type="catalytic activity">
    <reaction evidence="1">
        <text>L-tyrosyl-[protein] + ATP = O-(5'-adenylyl)-L-tyrosyl-[protein] + diphosphate</text>
        <dbReference type="Rhea" id="RHEA:54288"/>
        <dbReference type="Rhea" id="RHEA-COMP:10136"/>
        <dbReference type="Rhea" id="RHEA-COMP:13846"/>
        <dbReference type="ChEBI" id="CHEBI:30616"/>
        <dbReference type="ChEBI" id="CHEBI:33019"/>
        <dbReference type="ChEBI" id="CHEBI:46858"/>
        <dbReference type="ChEBI" id="CHEBI:83624"/>
        <dbReference type="EC" id="2.7.7.108"/>
    </reaction>
</comment>
<comment type="catalytic activity">
    <reaction evidence="1">
        <text>L-histidyl-[protein] + UTP = N(tele)-(5'-uridylyl)-L-histidyl-[protein] + diphosphate</text>
        <dbReference type="Rhea" id="RHEA:83891"/>
        <dbReference type="Rhea" id="RHEA-COMP:9745"/>
        <dbReference type="Rhea" id="RHEA-COMP:20239"/>
        <dbReference type="ChEBI" id="CHEBI:29979"/>
        <dbReference type="ChEBI" id="CHEBI:33019"/>
        <dbReference type="ChEBI" id="CHEBI:46398"/>
        <dbReference type="ChEBI" id="CHEBI:233474"/>
    </reaction>
</comment>
<comment type="catalytic activity">
    <reaction evidence="1">
        <text>L-seryl-[protein] + UTP = O-(5'-uridylyl)-L-seryl-[protein] + diphosphate</text>
        <dbReference type="Rhea" id="RHEA:64604"/>
        <dbReference type="Rhea" id="RHEA-COMP:9863"/>
        <dbReference type="Rhea" id="RHEA-COMP:16635"/>
        <dbReference type="ChEBI" id="CHEBI:29999"/>
        <dbReference type="ChEBI" id="CHEBI:33019"/>
        <dbReference type="ChEBI" id="CHEBI:46398"/>
        <dbReference type="ChEBI" id="CHEBI:156051"/>
    </reaction>
</comment>
<comment type="catalytic activity">
    <reaction evidence="1">
        <text>L-tyrosyl-[protein] + UTP = O-(5'-uridylyl)-L-tyrosyl-[protein] + diphosphate</text>
        <dbReference type="Rhea" id="RHEA:83887"/>
        <dbReference type="Rhea" id="RHEA-COMP:10136"/>
        <dbReference type="Rhea" id="RHEA-COMP:20238"/>
        <dbReference type="ChEBI" id="CHEBI:33019"/>
        <dbReference type="ChEBI" id="CHEBI:46398"/>
        <dbReference type="ChEBI" id="CHEBI:46858"/>
        <dbReference type="ChEBI" id="CHEBI:90602"/>
    </reaction>
</comment>
<comment type="cofactor">
    <cofactor evidence="1">
        <name>Mg(2+)</name>
        <dbReference type="ChEBI" id="CHEBI:18420"/>
    </cofactor>
    <cofactor evidence="1">
        <name>Mn(2+)</name>
        <dbReference type="ChEBI" id="CHEBI:29035"/>
    </cofactor>
</comment>
<comment type="similarity">
    <text evidence="1">Belongs to the SELO family.</text>
</comment>
<reference key="1">
    <citation type="submission" date="2006-06" db="EMBL/GenBank/DDBJ databases">
        <title>Complete sequence of Pseudoalteromonas atlantica T6c.</title>
        <authorList>
            <consortium name="US DOE Joint Genome Institute"/>
            <person name="Copeland A."/>
            <person name="Lucas S."/>
            <person name="Lapidus A."/>
            <person name="Barry K."/>
            <person name="Detter J.C."/>
            <person name="Glavina del Rio T."/>
            <person name="Hammon N."/>
            <person name="Israni S."/>
            <person name="Dalin E."/>
            <person name="Tice H."/>
            <person name="Pitluck S."/>
            <person name="Saunders E."/>
            <person name="Brettin T."/>
            <person name="Bruce D."/>
            <person name="Han C."/>
            <person name="Tapia R."/>
            <person name="Gilna P."/>
            <person name="Schmutz J."/>
            <person name="Larimer F."/>
            <person name="Land M."/>
            <person name="Hauser L."/>
            <person name="Kyrpides N."/>
            <person name="Kim E."/>
            <person name="Karls A.C."/>
            <person name="Bartlett D."/>
            <person name="Higgins B.P."/>
            <person name="Richardson P."/>
        </authorList>
    </citation>
    <scope>NUCLEOTIDE SEQUENCE [LARGE SCALE GENOMIC DNA]</scope>
    <source>
        <strain>T6c / ATCC BAA-1087</strain>
    </source>
</reference>
<feature type="chain" id="PRO_0000271844" description="Protein nucleotidyltransferase YdiU">
    <location>
        <begin position="1"/>
        <end position="480"/>
    </location>
</feature>
<feature type="active site" description="Proton acceptor" evidence="1">
    <location>
        <position position="246"/>
    </location>
</feature>
<feature type="binding site" evidence="1">
    <location>
        <position position="84"/>
    </location>
    <ligand>
        <name>ATP</name>
        <dbReference type="ChEBI" id="CHEBI:30616"/>
    </ligand>
</feature>
<feature type="binding site" evidence="1">
    <location>
        <position position="86"/>
    </location>
    <ligand>
        <name>ATP</name>
        <dbReference type="ChEBI" id="CHEBI:30616"/>
    </ligand>
</feature>
<feature type="binding site" evidence="1">
    <location>
        <position position="87"/>
    </location>
    <ligand>
        <name>ATP</name>
        <dbReference type="ChEBI" id="CHEBI:30616"/>
    </ligand>
</feature>
<feature type="binding site" evidence="1">
    <location>
        <position position="107"/>
    </location>
    <ligand>
        <name>ATP</name>
        <dbReference type="ChEBI" id="CHEBI:30616"/>
    </ligand>
</feature>
<feature type="binding site" evidence="1">
    <location>
        <position position="119"/>
    </location>
    <ligand>
        <name>ATP</name>
        <dbReference type="ChEBI" id="CHEBI:30616"/>
    </ligand>
</feature>
<feature type="binding site" evidence="1">
    <location>
        <position position="120"/>
    </location>
    <ligand>
        <name>ATP</name>
        <dbReference type="ChEBI" id="CHEBI:30616"/>
    </ligand>
</feature>
<feature type="binding site" evidence="1">
    <location>
        <position position="170"/>
    </location>
    <ligand>
        <name>ATP</name>
        <dbReference type="ChEBI" id="CHEBI:30616"/>
    </ligand>
</feature>
<feature type="binding site" evidence="1">
    <location>
        <position position="177"/>
    </location>
    <ligand>
        <name>ATP</name>
        <dbReference type="ChEBI" id="CHEBI:30616"/>
    </ligand>
</feature>
<feature type="binding site" evidence="1">
    <location>
        <position position="247"/>
    </location>
    <ligand>
        <name>Mg(2+)</name>
        <dbReference type="ChEBI" id="CHEBI:18420"/>
    </ligand>
</feature>
<feature type="binding site" evidence="1">
    <location>
        <position position="256"/>
    </location>
    <ligand>
        <name>ATP</name>
        <dbReference type="ChEBI" id="CHEBI:30616"/>
    </ligand>
</feature>
<feature type="binding site" evidence="1">
    <location>
        <position position="256"/>
    </location>
    <ligand>
        <name>Mg(2+)</name>
        <dbReference type="ChEBI" id="CHEBI:18420"/>
    </ligand>
</feature>
<keyword id="KW-0067">ATP-binding</keyword>
<keyword id="KW-0460">Magnesium</keyword>
<keyword id="KW-0464">Manganese</keyword>
<keyword id="KW-0479">Metal-binding</keyword>
<keyword id="KW-0547">Nucleotide-binding</keyword>
<keyword id="KW-0548">Nucleotidyltransferase</keyword>
<keyword id="KW-0808">Transferase</keyword>